<dbReference type="EMBL" id="BA000018">
    <property type="protein sequence ID" value="BAB42959.1"/>
    <property type="molecule type" value="Genomic_DNA"/>
</dbReference>
<dbReference type="PIR" id="H89974">
    <property type="entry name" value="H89974"/>
</dbReference>
<dbReference type="RefSeq" id="WP_001124422.1">
    <property type="nucleotide sequence ID" value="NC_002745.2"/>
</dbReference>
<dbReference type="SMR" id="P66003"/>
<dbReference type="EnsemblBacteria" id="BAB42959">
    <property type="protein sequence ID" value="BAB42959"/>
    <property type="gene ID" value="BAB42959"/>
</dbReference>
<dbReference type="KEGG" id="sau:SA1690"/>
<dbReference type="HOGENOM" id="CLU_066607_4_0_9"/>
<dbReference type="GO" id="GO:0005737">
    <property type="term" value="C:cytoplasm"/>
    <property type="evidence" value="ECO:0007669"/>
    <property type="project" value="UniProtKB-SubCell"/>
</dbReference>
<dbReference type="GO" id="GO:0006282">
    <property type="term" value="P:regulation of DNA repair"/>
    <property type="evidence" value="ECO:0007669"/>
    <property type="project" value="UniProtKB-UniRule"/>
</dbReference>
<dbReference type="Gene3D" id="1.10.10.10">
    <property type="entry name" value="Winged helix-like DNA-binding domain superfamily/Winged helix DNA-binding domain"/>
    <property type="match status" value="4"/>
</dbReference>
<dbReference type="HAMAP" id="MF_01114">
    <property type="entry name" value="RecX"/>
    <property type="match status" value="1"/>
</dbReference>
<dbReference type="InterPro" id="IPR053926">
    <property type="entry name" value="RecX_HTH_1st"/>
</dbReference>
<dbReference type="InterPro" id="IPR053925">
    <property type="entry name" value="RecX_HTH_3rd"/>
</dbReference>
<dbReference type="InterPro" id="IPR003783">
    <property type="entry name" value="Regulatory_RecX"/>
</dbReference>
<dbReference type="InterPro" id="IPR036388">
    <property type="entry name" value="WH-like_DNA-bd_sf"/>
</dbReference>
<dbReference type="NCBIfam" id="NF010733">
    <property type="entry name" value="PRK14135.1"/>
    <property type="match status" value="1"/>
</dbReference>
<dbReference type="PANTHER" id="PTHR33602">
    <property type="entry name" value="REGULATORY PROTEIN RECX FAMILY PROTEIN"/>
    <property type="match status" value="1"/>
</dbReference>
<dbReference type="PANTHER" id="PTHR33602:SF1">
    <property type="entry name" value="REGULATORY PROTEIN RECX FAMILY PROTEIN"/>
    <property type="match status" value="1"/>
</dbReference>
<dbReference type="Pfam" id="PF21982">
    <property type="entry name" value="RecX_HTH1"/>
    <property type="match status" value="1"/>
</dbReference>
<dbReference type="Pfam" id="PF21981">
    <property type="entry name" value="RecX_HTH3"/>
    <property type="match status" value="1"/>
</dbReference>
<sequence>MPKITKIEVQKKNKERFNLFLDEQFEMGIDIDTLVKFNLKKGQQLEAADMAEIQKYDHYRIGLNKAIQYLSYKKRTEKEVIQYLQKEEISEQAISEVIEYCYREKLIDHQDYAESLKNTMIRTTDKGPKIYQQKLYQLGIEPNIIEMFTELYREQQELDDIIQIAEKISKTKKGPQNKVKEKVMQSLIQKGFEMETIHAVLNEMDFTQDEAVLDDLLQRDLEKIYNKNRKKYTQQKLISKTIEGLMRKGYKYDKIKAKLEESGIADGTEEIE</sequence>
<gene>
    <name type="primary">recX</name>
    <name type="ordered locus">SA1690</name>
</gene>
<reference key="1">
    <citation type="journal article" date="2001" name="Lancet">
        <title>Whole genome sequencing of meticillin-resistant Staphylococcus aureus.</title>
        <authorList>
            <person name="Kuroda M."/>
            <person name="Ohta T."/>
            <person name="Uchiyama I."/>
            <person name="Baba T."/>
            <person name="Yuzawa H."/>
            <person name="Kobayashi I."/>
            <person name="Cui L."/>
            <person name="Oguchi A."/>
            <person name="Aoki K."/>
            <person name="Nagai Y."/>
            <person name="Lian J.-Q."/>
            <person name="Ito T."/>
            <person name="Kanamori M."/>
            <person name="Matsumaru H."/>
            <person name="Maruyama A."/>
            <person name="Murakami H."/>
            <person name="Hosoyama A."/>
            <person name="Mizutani-Ui Y."/>
            <person name="Takahashi N.K."/>
            <person name="Sawano T."/>
            <person name="Inoue R."/>
            <person name="Kaito C."/>
            <person name="Sekimizu K."/>
            <person name="Hirakawa H."/>
            <person name="Kuhara S."/>
            <person name="Goto S."/>
            <person name="Yabuzaki J."/>
            <person name="Kanehisa M."/>
            <person name="Yamashita A."/>
            <person name="Oshima K."/>
            <person name="Furuya K."/>
            <person name="Yoshino C."/>
            <person name="Shiba T."/>
            <person name="Hattori M."/>
            <person name="Ogasawara N."/>
            <person name="Hayashi H."/>
            <person name="Hiramatsu K."/>
        </authorList>
    </citation>
    <scope>NUCLEOTIDE SEQUENCE [LARGE SCALE GENOMIC DNA]</scope>
    <source>
        <strain>N315</strain>
    </source>
</reference>
<reference key="2">
    <citation type="submission" date="2007-10" db="UniProtKB">
        <title>Shotgun proteomic analysis of total and membrane protein extracts of S. aureus strain N315.</title>
        <authorList>
            <person name="Vaezzadeh A.R."/>
            <person name="Deshusses J."/>
            <person name="Lescuyer P."/>
            <person name="Hochstrasser D.F."/>
        </authorList>
    </citation>
    <scope>IDENTIFICATION BY MASS SPECTROMETRY [LARGE SCALE ANALYSIS]</scope>
    <source>
        <strain>N315</strain>
    </source>
</reference>
<feature type="chain" id="PRO_0000162471" description="Regulatory protein RecX">
    <location>
        <begin position="1"/>
        <end position="272"/>
    </location>
</feature>
<comment type="function">
    <text evidence="1">Modulates RecA activity.</text>
</comment>
<comment type="subcellular location">
    <subcellularLocation>
        <location evidence="2">Cytoplasm</location>
    </subcellularLocation>
</comment>
<comment type="similarity">
    <text evidence="2">Belongs to the RecX family.</text>
</comment>
<proteinExistence type="evidence at protein level"/>
<keyword id="KW-0963">Cytoplasm</keyword>
<protein>
    <recommendedName>
        <fullName>Regulatory protein RecX</fullName>
    </recommendedName>
</protein>
<evidence type="ECO:0000250" key="1"/>
<evidence type="ECO:0000305" key="2"/>
<organism>
    <name type="scientific">Staphylococcus aureus (strain N315)</name>
    <dbReference type="NCBI Taxonomy" id="158879"/>
    <lineage>
        <taxon>Bacteria</taxon>
        <taxon>Bacillati</taxon>
        <taxon>Bacillota</taxon>
        <taxon>Bacilli</taxon>
        <taxon>Bacillales</taxon>
        <taxon>Staphylococcaceae</taxon>
        <taxon>Staphylococcus</taxon>
    </lineage>
</organism>
<name>RECX_STAAN</name>
<accession>P66003</accession>
<accession>Q99T06</accession>